<organism>
    <name type="scientific">Burkholderia mallei (strain ATCC 23344)</name>
    <dbReference type="NCBI Taxonomy" id="243160"/>
    <lineage>
        <taxon>Bacteria</taxon>
        <taxon>Pseudomonadati</taxon>
        <taxon>Pseudomonadota</taxon>
        <taxon>Betaproteobacteria</taxon>
        <taxon>Burkholderiales</taxon>
        <taxon>Burkholderiaceae</taxon>
        <taxon>Burkholderia</taxon>
        <taxon>pseudomallei group</taxon>
    </lineage>
</organism>
<accession>Q62FC0</accession>
<name>HIS82_BURMA</name>
<keyword id="KW-0028">Amino-acid biosynthesis</keyword>
<keyword id="KW-0032">Aminotransferase</keyword>
<keyword id="KW-0368">Histidine biosynthesis</keyword>
<keyword id="KW-0663">Pyridoxal phosphate</keyword>
<keyword id="KW-1185">Reference proteome</keyword>
<keyword id="KW-0808">Transferase</keyword>
<feature type="chain" id="PRO_0000153336" description="Histidinol-phosphate aminotransferase 2">
    <location>
        <begin position="1"/>
        <end position="356"/>
    </location>
</feature>
<feature type="modified residue" description="N6-(pyridoxal phosphate)lysine" evidence="1">
    <location>
        <position position="213"/>
    </location>
</feature>
<comment type="catalytic activity">
    <reaction evidence="1">
        <text>L-histidinol phosphate + 2-oxoglutarate = 3-(imidazol-4-yl)-2-oxopropyl phosphate + L-glutamate</text>
        <dbReference type="Rhea" id="RHEA:23744"/>
        <dbReference type="ChEBI" id="CHEBI:16810"/>
        <dbReference type="ChEBI" id="CHEBI:29985"/>
        <dbReference type="ChEBI" id="CHEBI:57766"/>
        <dbReference type="ChEBI" id="CHEBI:57980"/>
        <dbReference type="EC" id="2.6.1.9"/>
    </reaction>
</comment>
<comment type="cofactor">
    <cofactor evidence="1">
        <name>pyridoxal 5'-phosphate</name>
        <dbReference type="ChEBI" id="CHEBI:597326"/>
    </cofactor>
</comment>
<comment type="pathway">
    <text evidence="1">Amino-acid biosynthesis; L-histidine biosynthesis; L-histidine from 5-phospho-alpha-D-ribose 1-diphosphate: step 7/9.</text>
</comment>
<comment type="subunit">
    <text evidence="1">Homodimer.</text>
</comment>
<comment type="similarity">
    <text evidence="1">Belongs to the class-II pyridoxal-phosphate-dependent aminotransferase family. Histidinol-phosphate aminotransferase subfamily.</text>
</comment>
<reference key="1">
    <citation type="journal article" date="2004" name="Proc. Natl. Acad. Sci. U.S.A.">
        <title>Structural flexibility in the Burkholderia mallei genome.</title>
        <authorList>
            <person name="Nierman W.C."/>
            <person name="DeShazer D."/>
            <person name="Kim H.S."/>
            <person name="Tettelin H."/>
            <person name="Nelson K.E."/>
            <person name="Feldblyum T.V."/>
            <person name="Ulrich R.L."/>
            <person name="Ronning C.M."/>
            <person name="Brinkac L.M."/>
            <person name="Daugherty S.C."/>
            <person name="Davidsen T.D."/>
            <person name="DeBoy R.T."/>
            <person name="Dimitrov G."/>
            <person name="Dodson R.J."/>
            <person name="Durkin A.S."/>
            <person name="Gwinn M.L."/>
            <person name="Haft D.H."/>
            <person name="Khouri H.M."/>
            <person name="Kolonay J.F."/>
            <person name="Madupu R."/>
            <person name="Mohammoud Y."/>
            <person name="Nelson W.C."/>
            <person name="Radune D."/>
            <person name="Romero C.M."/>
            <person name="Sarria S."/>
            <person name="Selengut J."/>
            <person name="Shamblin C."/>
            <person name="Sullivan S.A."/>
            <person name="White O."/>
            <person name="Yu Y."/>
            <person name="Zafar N."/>
            <person name="Zhou L."/>
            <person name="Fraser C.M."/>
        </authorList>
    </citation>
    <scope>NUCLEOTIDE SEQUENCE [LARGE SCALE GENOMIC DNA]</scope>
    <source>
        <strain>ATCC 23344</strain>
    </source>
</reference>
<sequence length="356" mass="39228">MSRYWSDIVRQLEPYVPGEQPALAHPVKLNTNENPYPPSPRALDAIRRELGDTGEALRRYPDPVARRLRETVAAYHGIAPEQVFAGNGSDEVLAHAFQALLQHDRPLRFPDITYSFYPTYARLYRVAYETVPLAGDFSIVVDDYLDDAGCVLFPNPNAPTGRALPLADIERIVAANPSSVVVIDEAYVDFGAESAVSLIARYPNLLVVHTVSKARSLAGMRVGFAFGDAALIDALTRVKDSFNSYPLDRLAQVATQASYEDEAWFQATRKQVIASRERLVGALAALGFDVVPSAANFVFARPRSHDAATLAAQLKQREIFVRHFKLPRIDQHLRITVGSDAECDALVAALRELLAA</sequence>
<proteinExistence type="inferred from homology"/>
<evidence type="ECO:0000255" key="1">
    <source>
        <dbReference type="HAMAP-Rule" id="MF_01023"/>
    </source>
</evidence>
<protein>
    <recommendedName>
        <fullName evidence="1">Histidinol-phosphate aminotransferase 2</fullName>
        <ecNumber evidence="1">2.6.1.9</ecNumber>
    </recommendedName>
    <alternativeName>
        <fullName evidence="1">Imidazole acetol-phosphate transaminase 2</fullName>
    </alternativeName>
</protein>
<dbReference type="EC" id="2.6.1.9" evidence="1"/>
<dbReference type="EMBL" id="CP000010">
    <property type="protein sequence ID" value="AAU48103.1"/>
    <property type="molecule type" value="Genomic_DNA"/>
</dbReference>
<dbReference type="RefSeq" id="YP_104607.1">
    <property type="nucleotide sequence ID" value="NC_006348.1"/>
</dbReference>
<dbReference type="SMR" id="Q62FC0"/>
<dbReference type="KEGG" id="bma:BMA3123"/>
<dbReference type="PATRIC" id="fig|243160.12.peg.3199"/>
<dbReference type="eggNOG" id="COG0079">
    <property type="taxonomic scope" value="Bacteria"/>
</dbReference>
<dbReference type="HOGENOM" id="CLU_017584_3_0_4"/>
<dbReference type="UniPathway" id="UPA00031">
    <property type="reaction ID" value="UER00012"/>
</dbReference>
<dbReference type="Proteomes" id="UP000006693">
    <property type="component" value="Chromosome 1"/>
</dbReference>
<dbReference type="GO" id="GO:0004400">
    <property type="term" value="F:histidinol-phosphate transaminase activity"/>
    <property type="evidence" value="ECO:0007669"/>
    <property type="project" value="UniProtKB-UniRule"/>
</dbReference>
<dbReference type="GO" id="GO:0030170">
    <property type="term" value="F:pyridoxal phosphate binding"/>
    <property type="evidence" value="ECO:0007669"/>
    <property type="project" value="InterPro"/>
</dbReference>
<dbReference type="GO" id="GO:0000105">
    <property type="term" value="P:L-histidine biosynthetic process"/>
    <property type="evidence" value="ECO:0007669"/>
    <property type="project" value="UniProtKB-UniRule"/>
</dbReference>
<dbReference type="CDD" id="cd00609">
    <property type="entry name" value="AAT_like"/>
    <property type="match status" value="1"/>
</dbReference>
<dbReference type="Gene3D" id="3.90.1150.10">
    <property type="entry name" value="Aspartate Aminotransferase, domain 1"/>
    <property type="match status" value="1"/>
</dbReference>
<dbReference type="Gene3D" id="3.40.640.10">
    <property type="entry name" value="Type I PLP-dependent aspartate aminotransferase-like (Major domain)"/>
    <property type="match status" value="1"/>
</dbReference>
<dbReference type="HAMAP" id="MF_01023">
    <property type="entry name" value="HisC_aminotrans_2"/>
    <property type="match status" value="1"/>
</dbReference>
<dbReference type="InterPro" id="IPR001917">
    <property type="entry name" value="Aminotrans_II_pyridoxalP_BS"/>
</dbReference>
<dbReference type="InterPro" id="IPR004839">
    <property type="entry name" value="Aminotransferase_I/II_large"/>
</dbReference>
<dbReference type="InterPro" id="IPR005861">
    <property type="entry name" value="HisP_aminotrans"/>
</dbReference>
<dbReference type="InterPro" id="IPR015424">
    <property type="entry name" value="PyrdxlP-dep_Trfase"/>
</dbReference>
<dbReference type="InterPro" id="IPR015421">
    <property type="entry name" value="PyrdxlP-dep_Trfase_major"/>
</dbReference>
<dbReference type="InterPro" id="IPR015422">
    <property type="entry name" value="PyrdxlP-dep_Trfase_small"/>
</dbReference>
<dbReference type="NCBIfam" id="TIGR01141">
    <property type="entry name" value="hisC"/>
    <property type="match status" value="1"/>
</dbReference>
<dbReference type="PANTHER" id="PTHR42885:SF2">
    <property type="entry name" value="HISTIDINOL-PHOSPHATE AMINOTRANSFERASE"/>
    <property type="match status" value="1"/>
</dbReference>
<dbReference type="PANTHER" id="PTHR42885">
    <property type="entry name" value="HISTIDINOL-PHOSPHATE AMINOTRANSFERASE-RELATED"/>
    <property type="match status" value="1"/>
</dbReference>
<dbReference type="Pfam" id="PF00155">
    <property type="entry name" value="Aminotran_1_2"/>
    <property type="match status" value="1"/>
</dbReference>
<dbReference type="SUPFAM" id="SSF53383">
    <property type="entry name" value="PLP-dependent transferases"/>
    <property type="match status" value="1"/>
</dbReference>
<dbReference type="PROSITE" id="PS00599">
    <property type="entry name" value="AA_TRANSFER_CLASS_2"/>
    <property type="match status" value="1"/>
</dbReference>
<gene>
    <name evidence="1" type="primary">hisC2</name>
    <name type="synonym">hisC-2</name>
    <name type="ordered locus">BMA3123</name>
</gene>